<evidence type="ECO:0000255" key="1">
    <source>
        <dbReference type="HAMAP-Rule" id="MF_00155"/>
    </source>
</evidence>
<accession>Q1GE51</accession>
<organism>
    <name type="scientific">Ruegeria sp. (strain TM1040)</name>
    <name type="common">Silicibacter sp.</name>
    <dbReference type="NCBI Taxonomy" id="292414"/>
    <lineage>
        <taxon>Bacteria</taxon>
        <taxon>Pseudomonadati</taxon>
        <taxon>Pseudomonadota</taxon>
        <taxon>Alphaproteobacteria</taxon>
        <taxon>Rhodobacterales</taxon>
        <taxon>Roseobacteraceae</taxon>
        <taxon>Ruegeria</taxon>
    </lineage>
</organism>
<dbReference type="EMBL" id="CP000377">
    <property type="protein sequence ID" value="ABF65065.1"/>
    <property type="molecule type" value="Genomic_DNA"/>
</dbReference>
<dbReference type="RefSeq" id="WP_011539653.1">
    <property type="nucleotide sequence ID" value="NC_008044.1"/>
</dbReference>
<dbReference type="SMR" id="Q1GE51"/>
<dbReference type="STRING" id="292414.TM1040_2333"/>
<dbReference type="KEGG" id="sit:TM1040_2333"/>
<dbReference type="eggNOG" id="COG3175">
    <property type="taxonomic scope" value="Bacteria"/>
</dbReference>
<dbReference type="HOGENOM" id="CLU_045000_5_0_5"/>
<dbReference type="OrthoDB" id="9804841at2"/>
<dbReference type="Proteomes" id="UP000000636">
    <property type="component" value="Chromosome"/>
</dbReference>
<dbReference type="GO" id="GO:0005886">
    <property type="term" value="C:plasma membrane"/>
    <property type="evidence" value="ECO:0007669"/>
    <property type="project" value="UniProtKB-SubCell"/>
</dbReference>
<dbReference type="GO" id="GO:0005507">
    <property type="term" value="F:copper ion binding"/>
    <property type="evidence" value="ECO:0007669"/>
    <property type="project" value="InterPro"/>
</dbReference>
<dbReference type="GO" id="GO:0008535">
    <property type="term" value="P:respiratory chain complex IV assembly"/>
    <property type="evidence" value="ECO:0007669"/>
    <property type="project" value="UniProtKB-UniRule"/>
</dbReference>
<dbReference type="FunFam" id="2.60.370.10:FF:000001">
    <property type="entry name" value="COX11 cytochrome c oxidase assembly homolog"/>
    <property type="match status" value="1"/>
</dbReference>
<dbReference type="Gene3D" id="2.60.370.10">
    <property type="entry name" value="Ctag/Cox11"/>
    <property type="match status" value="1"/>
</dbReference>
<dbReference type="HAMAP" id="MF_00155">
    <property type="entry name" value="CtaG"/>
    <property type="match status" value="1"/>
</dbReference>
<dbReference type="InterPro" id="IPR023471">
    <property type="entry name" value="CtaG/Cox11_dom_sf"/>
</dbReference>
<dbReference type="InterPro" id="IPR007533">
    <property type="entry name" value="Cyt_c_oxidase_assmbl_CtaG"/>
</dbReference>
<dbReference type="NCBIfam" id="NF003465">
    <property type="entry name" value="PRK05089.1"/>
    <property type="match status" value="1"/>
</dbReference>
<dbReference type="PANTHER" id="PTHR21320:SF3">
    <property type="entry name" value="CYTOCHROME C OXIDASE ASSEMBLY PROTEIN COX11, MITOCHONDRIAL-RELATED"/>
    <property type="match status" value="1"/>
</dbReference>
<dbReference type="PANTHER" id="PTHR21320">
    <property type="entry name" value="CYTOCHROME C OXIDASE ASSEMBLY PROTEIN COX11-RELATED"/>
    <property type="match status" value="1"/>
</dbReference>
<dbReference type="Pfam" id="PF04442">
    <property type="entry name" value="CtaG_Cox11"/>
    <property type="match status" value="1"/>
</dbReference>
<dbReference type="PIRSF" id="PIRSF005413">
    <property type="entry name" value="COX11"/>
    <property type="match status" value="1"/>
</dbReference>
<dbReference type="SUPFAM" id="SSF110111">
    <property type="entry name" value="Ctag/Cox11"/>
    <property type="match status" value="1"/>
</dbReference>
<feature type="chain" id="PRO_0000311208" description="Cytochrome c oxidase assembly protein CtaG">
    <location>
        <begin position="1"/>
        <end position="195"/>
    </location>
</feature>
<feature type="topological domain" description="Cytoplasmic" evidence="1">
    <location>
        <begin position="1"/>
        <end position="9"/>
    </location>
</feature>
<feature type="transmembrane region" description="Helical; Signal-anchor for type II membrane protein" evidence="1">
    <location>
        <begin position="10"/>
        <end position="30"/>
    </location>
</feature>
<feature type="topological domain" description="Periplasmic" evidence="1">
    <location>
        <begin position="31"/>
        <end position="195"/>
    </location>
</feature>
<protein>
    <recommendedName>
        <fullName evidence="1">Cytochrome c oxidase assembly protein CtaG</fullName>
    </recommendedName>
</protein>
<keyword id="KW-0997">Cell inner membrane</keyword>
<keyword id="KW-1003">Cell membrane</keyword>
<keyword id="KW-0186">Copper</keyword>
<keyword id="KW-0472">Membrane</keyword>
<keyword id="KW-1185">Reference proteome</keyword>
<keyword id="KW-0735">Signal-anchor</keyword>
<keyword id="KW-0812">Transmembrane</keyword>
<keyword id="KW-1133">Transmembrane helix</keyword>
<name>COXZ_RUEST</name>
<reference key="1">
    <citation type="submission" date="2006-05" db="EMBL/GenBank/DDBJ databases">
        <title>Complete sequence of chromosome of Silicibacter sp. TM1040.</title>
        <authorList>
            <consortium name="US DOE Joint Genome Institute"/>
            <person name="Copeland A."/>
            <person name="Lucas S."/>
            <person name="Lapidus A."/>
            <person name="Barry K."/>
            <person name="Detter J.C."/>
            <person name="Glavina del Rio T."/>
            <person name="Hammon N."/>
            <person name="Israni S."/>
            <person name="Dalin E."/>
            <person name="Tice H."/>
            <person name="Pitluck S."/>
            <person name="Brettin T."/>
            <person name="Bruce D."/>
            <person name="Han C."/>
            <person name="Tapia R."/>
            <person name="Goodwin L."/>
            <person name="Thompson L.S."/>
            <person name="Gilna P."/>
            <person name="Schmutz J."/>
            <person name="Larimer F."/>
            <person name="Land M."/>
            <person name="Hauser L."/>
            <person name="Kyrpides N."/>
            <person name="Kim E."/>
            <person name="Belas R."/>
            <person name="Moran M.A."/>
            <person name="Buchan A."/>
            <person name="Gonzalez J.M."/>
            <person name="Schell M.A."/>
            <person name="Sun F."/>
            <person name="Richardson P."/>
        </authorList>
    </citation>
    <scope>NUCLEOTIDE SEQUENCE [LARGE SCALE GENOMIC DNA]</scope>
    <source>
        <strain>TM1040</strain>
    </source>
</reference>
<proteinExistence type="inferred from homology"/>
<gene>
    <name evidence="1" type="primary">ctaG</name>
    <name type="ordered locus">TM1040_2333</name>
</gene>
<sequence length="195" mass="21678">MALNGPQKTVVQLVGVVVLMGGLAWASVPFYDWFCRVTGFGGVTQVAETGSDQVLDQTIKVRFDASKDRGMPWEFKPVERIMELKIGETGLAFYEAYNPTDRPVAGQASYNVAPFSAGYYFDKIQCFCFNEQVLQPGERVMMPVTFFVDPEIIEDPEAKYVHTITLSYTFHEIDLPEGYAALDTGDTSGAETELN</sequence>
<comment type="function">
    <text evidence="1">Exerts its effect at some terminal stage of cytochrome c oxidase synthesis, probably by being involved in the insertion of the copper B into subunit I.</text>
</comment>
<comment type="subcellular location">
    <subcellularLocation>
        <location evidence="1">Cell inner membrane</location>
        <topology evidence="1">Single-pass type II membrane protein</topology>
        <orientation evidence="1">Periplasmic side</orientation>
    </subcellularLocation>
</comment>
<comment type="similarity">
    <text evidence="1">Belongs to the COX11/CtaG family.</text>
</comment>